<organism>
    <name type="scientific">Sendai virus (strain Harris)</name>
    <name type="common">SeV</name>
    <dbReference type="NCBI Taxonomy" id="11196"/>
    <lineage>
        <taxon>Viruses</taxon>
        <taxon>Riboviria</taxon>
        <taxon>Orthornavirae</taxon>
        <taxon>Negarnaviricota</taxon>
        <taxon>Haploviricotina</taxon>
        <taxon>Monjiviricetes</taxon>
        <taxon>Mononegavirales</taxon>
        <taxon>Paramyxoviridae</taxon>
        <taxon>Feraresvirinae</taxon>
        <taxon>Respirovirus</taxon>
        <taxon>Respirovirus muris</taxon>
    </lineage>
</organism>
<comment type="function">
    <text evidence="2 4">Forms the helical nucleocapsid (NC) in a ratio of 1 N per 6 ribonucleotides, protecting the genome from nucleases (PubMed:8392616). The encapsidated genomic RNA serves as template for transcription and replication; encapsidation by N is coupled to RNA synthesis. Forms the encapsidation complex with the phosphoprotein protein P. Before encapsidation, the newly synthesized free N protein, so-called N0, is chaperoned by P (By similarity).</text>
</comment>
<comment type="subunit">
    <text evidence="1 2 3">Homomultimer; forms the nucleocapsid (By similarity). Binds to the viral genomic RNA (By similarity). N0 interacts with the phosphoprotein (via N-terminus); this interaction allows P to chaperon N0 to avoid N polymerization before encapsidation (By similarity). Interacts as N-RNA template with the phosphoprotein (via C-terminus); this interaction positions the polymerase on the template (By similarity).</text>
</comment>
<comment type="subcellular location">
    <subcellularLocation>
        <location evidence="5">Virion</location>
    </subcellularLocation>
    <subcellularLocation>
        <location>Host cytoplasm</location>
    </subcellularLocation>
</comment>
<comment type="domain">
    <text evidence="2">Ncore is globular and carries regions required for self-assembly and RNA-binding. Ntail is an intrinsically disordered monomeric domain in the C-terminus.</text>
</comment>
<comment type="miscellaneous">
    <text evidence="5">Most abundant protein in the virion. Since the viral RNA genome consists of 15,383 bases,there are 2564 molecules per encapsidated genome.</text>
</comment>
<comment type="similarity">
    <text evidence="5">Belongs to the paramyxoviruses nucleocapsid family.</text>
</comment>
<proteinExistence type="evidence at protein level"/>
<name>NCAP_SENDH</name>
<dbReference type="EMBL" id="M29343">
    <property type="protein sequence ID" value="AAA47812.1"/>
    <property type="molecule type" value="Genomic_RNA"/>
</dbReference>
<dbReference type="SMR" id="P14155"/>
<dbReference type="GO" id="GO:0030430">
    <property type="term" value="C:host cell cytoplasm"/>
    <property type="evidence" value="ECO:0007669"/>
    <property type="project" value="UniProtKB-SubCell"/>
</dbReference>
<dbReference type="GO" id="GO:0032991">
    <property type="term" value="C:protein-containing complex"/>
    <property type="evidence" value="ECO:0000315"/>
    <property type="project" value="CAFA"/>
</dbReference>
<dbReference type="GO" id="GO:1990904">
    <property type="term" value="C:ribonucleoprotein complex"/>
    <property type="evidence" value="ECO:0007669"/>
    <property type="project" value="UniProtKB-KW"/>
</dbReference>
<dbReference type="GO" id="GO:0019013">
    <property type="term" value="C:viral nucleocapsid"/>
    <property type="evidence" value="ECO:0007669"/>
    <property type="project" value="UniProtKB-KW"/>
</dbReference>
<dbReference type="GO" id="GO:0019904">
    <property type="term" value="F:protein domain specific binding"/>
    <property type="evidence" value="ECO:0000353"/>
    <property type="project" value="CAFA"/>
</dbReference>
<dbReference type="GO" id="GO:0003723">
    <property type="term" value="F:RNA binding"/>
    <property type="evidence" value="ECO:0007669"/>
    <property type="project" value="UniProtKB-KW"/>
</dbReference>
<dbReference type="GO" id="GO:0039689">
    <property type="term" value="P:negative stranded viral RNA replication"/>
    <property type="evidence" value="ECO:0000314"/>
    <property type="project" value="UniProtKB"/>
</dbReference>
<sequence length="169" mass="18589">MAGLLSTFDTFSSRRSESINKSGGGAVIPGQKSTVSVFVLGPSVTDDADKLFIATTFLAHSLNTDKQHSQRGGFLVSLLAMAYSSPELYLTTNGVNADVKYVIYNIEKDPKRTKTDRFIVKTRDMEYERTTEWLFGPMVNKSPLFQGQRDAADPDTLLQTYGYPACLGA</sequence>
<evidence type="ECO:0000250" key="1">
    <source>
        <dbReference type="UniProtKB" id="O57286"/>
    </source>
</evidence>
<evidence type="ECO:0000250" key="2">
    <source>
        <dbReference type="UniProtKB" id="P06159"/>
    </source>
</evidence>
<evidence type="ECO:0000250" key="3">
    <source>
        <dbReference type="UniProtKB" id="Q07097"/>
    </source>
</evidence>
<evidence type="ECO:0000269" key="4">
    <source>
    </source>
</evidence>
<evidence type="ECO:0000305" key="5"/>
<reference key="1">
    <citation type="journal article" date="1984" name="J. Gen. Virol.">
        <title>Preparation and analysis of the nucleocapsid proteins of vesicular stomatitis virus and sendai virus, and analysis of the sendai virus leader-NP gene region.</title>
        <authorList>
            <person name="Blumberg B.M."/>
            <person name="Giorgi C."/>
            <person name="Rose K."/>
            <person name="Kolakofsky D."/>
        </authorList>
    </citation>
    <scope>NUCLEOTIDE SEQUENCE [GENOMIC RNA]</scope>
</reference>
<reference key="2">
    <citation type="journal article" date="1993" name="J. Virol.">
        <title>The rule of six, a basic feature for efficient replication of Sendai virus defective interfering RNA.</title>
        <authorList>
            <person name="Calain P."/>
            <person name="Roux L."/>
        </authorList>
    </citation>
    <scope>RNA-BINDING</scope>
    <scope>FUNCTION</scope>
</reference>
<reference key="3">
    <citation type="journal article" date="1995" name="J. Virol.">
        <title>An N-terminal domain of the Sendai paramyxovirus P protein acts as a chaperone for the NP protein during the nascent chain assembly step of genome replication.</title>
        <authorList>
            <person name="Curran J."/>
            <person name="Marq J.-B."/>
            <person name="Kolakofsky D."/>
        </authorList>
    </citation>
    <scope>INTERACTION OF N0 WITH P PROTEIN</scope>
</reference>
<gene>
    <name type="primary">N</name>
    <name type="synonym">NP</name>
</gene>
<feature type="chain" id="PRO_0000142682" description="Nucleoprotein">
    <location>
        <begin position="1"/>
        <end position="169" status="greater than"/>
    </location>
</feature>
<feature type="non-terminal residue">
    <location>
        <position position="169"/>
    </location>
</feature>
<protein>
    <recommendedName>
        <fullName>Nucleoprotein</fullName>
    </recommendedName>
    <alternativeName>
        <fullName>Nucleocapsid protein</fullName>
        <shortName>NP</shortName>
        <shortName>Protein N</shortName>
    </alternativeName>
</protein>
<organismHost>
    <name type="scientific">Cavia cutleri</name>
    <name type="common">Guinea pig</name>
    <dbReference type="NCBI Taxonomy" id="10144"/>
</organismHost>
<organismHost>
    <name type="scientific">Cricetidae sp.</name>
    <name type="common">Hamster</name>
    <dbReference type="NCBI Taxonomy" id="36483"/>
</organismHost>
<organismHost>
    <name type="scientific">Mus musculus</name>
    <name type="common">Mouse</name>
    <dbReference type="NCBI Taxonomy" id="10090"/>
</organismHost>
<organismHost>
    <name type="scientific">Rattus norvegicus</name>
    <name type="common">Rat</name>
    <dbReference type="NCBI Taxonomy" id="10116"/>
</organismHost>
<accession>P14155</accession>
<keyword id="KW-1035">Host cytoplasm</keyword>
<keyword id="KW-0687">Ribonucleoprotein</keyword>
<keyword id="KW-0694">RNA-binding</keyword>
<keyword id="KW-0543">Viral nucleoprotein</keyword>
<keyword id="KW-0946">Virion</keyword>